<organism>
    <name type="scientific">Leptospira borgpetersenii</name>
    <dbReference type="NCBI Taxonomy" id="174"/>
    <lineage>
        <taxon>Bacteria</taxon>
        <taxon>Pseudomonadati</taxon>
        <taxon>Spirochaetota</taxon>
        <taxon>Spirochaetia</taxon>
        <taxon>Leptospirales</taxon>
        <taxon>Leptospiraceae</taxon>
        <taxon>Leptospira</taxon>
    </lineage>
</organism>
<proteinExistence type="inferred from homology"/>
<evidence type="ECO:0000250" key="1"/>
<evidence type="ECO:0000255" key="2"/>
<evidence type="ECO:0000305" key="3"/>
<reference key="1">
    <citation type="journal article" date="1999" name="Microb. Pathog.">
        <title>Genetic organization of the lipopolysaccharide O-antigen biosynthetic locus of Leptospira borgpetersenii serovar Hardjobovis.</title>
        <authorList>
            <person name="Kalambaheti T."/>
            <person name="Bulach D.M."/>
            <person name="Rajakumar K."/>
            <person name="Adler B."/>
        </authorList>
    </citation>
    <scope>NUCLEOTIDE SEQUENCE [GENOMIC DNA]</scope>
    <source>
        <strain>L171 / Serovar Hardjobovis</strain>
    </source>
</reference>
<accession>Q9ZGM0</accession>
<name>HIS6_LEPBO</name>
<protein>
    <recommendedName>
        <fullName>Putative imidazole glycerol phosphate synthase subunit HisF</fullName>
        <ecNumber>4.3.2.10</ecNumber>
    </recommendedName>
    <alternativeName>
        <fullName>IGP synthase cyclase subunit</fullName>
    </alternativeName>
    <alternativeName>
        <fullName>IGP synthase subunit HisF</fullName>
    </alternativeName>
    <alternativeName>
        <fullName>ImGP synthase subunit HisF</fullName>
        <shortName>IGPS subunit HisF</shortName>
    </alternativeName>
</protein>
<comment type="function">
    <text evidence="1">IGPS catalyzes the conversion of PRFAR and glutamine to IGP, AICAR and glutamate. The HisF subunit catalyzes the cyclization activity that produces IGP and AICAR from PRFAR using the ammonia provided by the HisH subunit (By similarity).</text>
</comment>
<comment type="catalytic activity">
    <reaction>
        <text>5-[(5-phospho-1-deoxy-D-ribulos-1-ylimino)methylamino]-1-(5-phospho-beta-D-ribosyl)imidazole-4-carboxamide + L-glutamine = D-erythro-1-(imidazol-4-yl)glycerol 3-phosphate + 5-amino-1-(5-phospho-beta-D-ribosyl)imidazole-4-carboxamide + L-glutamate + H(+)</text>
        <dbReference type="Rhea" id="RHEA:24793"/>
        <dbReference type="ChEBI" id="CHEBI:15378"/>
        <dbReference type="ChEBI" id="CHEBI:29985"/>
        <dbReference type="ChEBI" id="CHEBI:58278"/>
        <dbReference type="ChEBI" id="CHEBI:58359"/>
        <dbReference type="ChEBI" id="CHEBI:58475"/>
        <dbReference type="ChEBI" id="CHEBI:58525"/>
        <dbReference type="EC" id="4.3.2.10"/>
    </reaction>
</comment>
<comment type="pathway">
    <text>Amino-acid biosynthesis; L-histidine biosynthesis; L-histidine from 5-phospho-alpha-D-ribose 1-diphosphate: step 5/9.</text>
</comment>
<comment type="subunit">
    <text evidence="1">Heterodimer of HisH and HisF.</text>
</comment>
<comment type="subcellular location">
    <subcellularLocation>
        <location evidence="1">Cytoplasm</location>
    </subcellularLocation>
</comment>
<comment type="similarity">
    <text evidence="3">Belongs to the HisA/HisF family.</text>
</comment>
<comment type="caution">
    <text evidence="3">The potential active site Asp residue in position 11 is replaced by a Leu.</text>
</comment>
<keyword id="KW-0028">Amino-acid biosynthesis</keyword>
<keyword id="KW-0963">Cytoplasm</keyword>
<keyword id="KW-0368">Histidine biosynthesis</keyword>
<keyword id="KW-0456">Lyase</keyword>
<dbReference type="EC" id="4.3.2.10"/>
<dbReference type="EMBL" id="AF078135">
    <property type="protein sequence ID" value="AAD12949.1"/>
    <property type="molecule type" value="Genomic_DNA"/>
</dbReference>
<dbReference type="RefSeq" id="WP_011669953.1">
    <property type="nucleotide sequence ID" value="NZ_VCHK01000056.1"/>
</dbReference>
<dbReference type="SMR" id="Q9ZGM0"/>
<dbReference type="OMA" id="IPCLLVH"/>
<dbReference type="UniPathway" id="UPA00031">
    <property type="reaction ID" value="UER00010"/>
</dbReference>
<dbReference type="GO" id="GO:0005737">
    <property type="term" value="C:cytoplasm"/>
    <property type="evidence" value="ECO:0007669"/>
    <property type="project" value="UniProtKB-SubCell"/>
</dbReference>
<dbReference type="GO" id="GO:0000107">
    <property type="term" value="F:imidazoleglycerol-phosphate synthase activity"/>
    <property type="evidence" value="ECO:0007669"/>
    <property type="project" value="InterPro"/>
</dbReference>
<dbReference type="GO" id="GO:0016829">
    <property type="term" value="F:lyase activity"/>
    <property type="evidence" value="ECO:0007669"/>
    <property type="project" value="UniProtKB-KW"/>
</dbReference>
<dbReference type="GO" id="GO:0000105">
    <property type="term" value="P:L-histidine biosynthetic process"/>
    <property type="evidence" value="ECO:0007669"/>
    <property type="project" value="UniProtKB-UniPathway"/>
</dbReference>
<dbReference type="CDD" id="cd04731">
    <property type="entry name" value="HisF"/>
    <property type="match status" value="1"/>
</dbReference>
<dbReference type="Gene3D" id="3.20.20.70">
    <property type="entry name" value="Aldolase class I"/>
    <property type="match status" value="1"/>
</dbReference>
<dbReference type="InterPro" id="IPR013785">
    <property type="entry name" value="Aldolase_TIM"/>
</dbReference>
<dbReference type="InterPro" id="IPR006062">
    <property type="entry name" value="His_biosynth"/>
</dbReference>
<dbReference type="InterPro" id="IPR004651">
    <property type="entry name" value="HisF"/>
</dbReference>
<dbReference type="InterPro" id="IPR050064">
    <property type="entry name" value="IGPS_HisA/HisF"/>
</dbReference>
<dbReference type="InterPro" id="IPR011060">
    <property type="entry name" value="RibuloseP-bd_barrel"/>
</dbReference>
<dbReference type="NCBIfam" id="NF038364">
    <property type="entry name" value="AglZ_HisF2_fam"/>
    <property type="match status" value="1"/>
</dbReference>
<dbReference type="PANTHER" id="PTHR21235:SF2">
    <property type="entry name" value="IMIDAZOLE GLYCEROL PHOSPHATE SYNTHASE HISHF"/>
    <property type="match status" value="1"/>
</dbReference>
<dbReference type="PANTHER" id="PTHR21235">
    <property type="entry name" value="IMIDAZOLE GLYCEROL PHOSPHATE SYNTHASE SUBUNIT HISF/H IGP SYNTHASE SUBUNIT HISF/H"/>
    <property type="match status" value="1"/>
</dbReference>
<dbReference type="Pfam" id="PF00977">
    <property type="entry name" value="His_biosynth"/>
    <property type="match status" value="1"/>
</dbReference>
<dbReference type="SUPFAM" id="SSF51366">
    <property type="entry name" value="Ribulose-phoshate binding barrel"/>
    <property type="match status" value="1"/>
</dbReference>
<feature type="chain" id="PRO_0000142173" description="Putative imidazole glycerol phosphate synthase subunit HisF">
    <location>
        <begin position="1"/>
        <end position="254"/>
    </location>
</feature>
<feature type="active site" evidence="2">
    <location>
        <position position="130"/>
    </location>
</feature>
<sequence>MLRPRIIPVLLLQENGLVKTIQFGDERYIGDPLNAVRIFNEKEADELAVLDISASKKGKEPNYRLIERLANECRMPLCYGGGIKDLDQANRILSFGVEKIIVSSLAIENPKMISTMASYLGSQSVVVAIDFKKAMLSRRYEVMIHNGTKKTGKHLEDLVKEVIELGAGEIILNSIDRDGTMVGYEIEIIKKIQSICKIPITVLGGAGSLDHIKNLIQELGIIGVAAGSLFVYKGVHKAVLINYPNGTDKEALFP</sequence>
<gene>
    <name type="primary">hisF</name>
</gene>